<feature type="chain" id="PRO_1000122005" description="Chromosomal replication initiator protein DnaA">
    <location>
        <begin position="1"/>
        <end position="511"/>
    </location>
</feature>
<feature type="region of interest" description="Domain I, interacts with DnaA modulators" evidence="1">
    <location>
        <begin position="1"/>
        <end position="90"/>
    </location>
</feature>
<feature type="region of interest" description="Domain II" evidence="1">
    <location>
        <begin position="91"/>
        <end position="174"/>
    </location>
</feature>
<feature type="region of interest" description="Disordered" evidence="2">
    <location>
        <begin position="125"/>
        <end position="161"/>
    </location>
</feature>
<feature type="region of interest" description="Domain III, AAA+ region" evidence="1">
    <location>
        <begin position="175"/>
        <end position="391"/>
    </location>
</feature>
<feature type="region of interest" description="Domain IV, binds dsDNA" evidence="1">
    <location>
        <begin position="392"/>
        <end position="511"/>
    </location>
</feature>
<feature type="binding site" evidence="1">
    <location>
        <position position="219"/>
    </location>
    <ligand>
        <name>ATP</name>
        <dbReference type="ChEBI" id="CHEBI:30616"/>
    </ligand>
</feature>
<feature type="binding site" evidence="1">
    <location>
        <position position="221"/>
    </location>
    <ligand>
        <name>ATP</name>
        <dbReference type="ChEBI" id="CHEBI:30616"/>
    </ligand>
</feature>
<feature type="binding site" evidence="1">
    <location>
        <position position="222"/>
    </location>
    <ligand>
        <name>ATP</name>
        <dbReference type="ChEBI" id="CHEBI:30616"/>
    </ligand>
</feature>
<feature type="binding site" evidence="1">
    <location>
        <position position="223"/>
    </location>
    <ligand>
        <name>ATP</name>
        <dbReference type="ChEBI" id="CHEBI:30616"/>
    </ligand>
</feature>
<gene>
    <name evidence="1" type="primary">dnaA</name>
    <name type="ordered locus">PputW619_0001</name>
</gene>
<comment type="function">
    <text evidence="1">Plays an essential role in the initiation and regulation of chromosomal replication. ATP-DnaA binds to the origin of replication (oriC) to initiate formation of the DNA replication initiation complex once per cell cycle. Binds the DnaA box (a 9 base pair repeat at the origin) and separates the double-stranded (ds)DNA. Forms a right-handed helical filament on oriC DNA; dsDNA binds to the exterior of the filament while single-stranded (ss)DNA is stabiized in the filament's interior. The ATP-DnaA-oriC complex binds and stabilizes one strand of the AT-rich DNA unwinding element (DUE), permitting loading of DNA polymerase. After initiation quickly degrades to an ADP-DnaA complex that is not apt for DNA replication. Binds acidic phospholipids.</text>
</comment>
<comment type="subunit">
    <text evidence="1">Oligomerizes as a right-handed, spiral filament on DNA at oriC.</text>
</comment>
<comment type="subcellular location">
    <subcellularLocation>
        <location evidence="1">Cytoplasm</location>
    </subcellularLocation>
</comment>
<comment type="domain">
    <text evidence="1">Domain I is involved in oligomerization and binding regulators, domain II is flexibile and of varying length in different bacteria, domain III forms the AAA+ region, while domain IV binds dsDNA.</text>
</comment>
<comment type="similarity">
    <text evidence="1">Belongs to the DnaA family.</text>
</comment>
<dbReference type="EMBL" id="CP000949">
    <property type="protein sequence ID" value="ACA70507.1"/>
    <property type="molecule type" value="Genomic_DNA"/>
</dbReference>
<dbReference type="SMR" id="B1J3Y2"/>
<dbReference type="STRING" id="390235.PputW619_0001"/>
<dbReference type="KEGG" id="ppw:PputW619_0001"/>
<dbReference type="eggNOG" id="COG0593">
    <property type="taxonomic scope" value="Bacteria"/>
</dbReference>
<dbReference type="HOGENOM" id="CLU_026910_0_1_6"/>
<dbReference type="OrthoDB" id="9807019at2"/>
<dbReference type="GO" id="GO:0005737">
    <property type="term" value="C:cytoplasm"/>
    <property type="evidence" value="ECO:0007669"/>
    <property type="project" value="UniProtKB-SubCell"/>
</dbReference>
<dbReference type="GO" id="GO:0005886">
    <property type="term" value="C:plasma membrane"/>
    <property type="evidence" value="ECO:0007669"/>
    <property type="project" value="TreeGrafter"/>
</dbReference>
<dbReference type="GO" id="GO:0005524">
    <property type="term" value="F:ATP binding"/>
    <property type="evidence" value="ECO:0007669"/>
    <property type="project" value="UniProtKB-UniRule"/>
</dbReference>
<dbReference type="GO" id="GO:0016887">
    <property type="term" value="F:ATP hydrolysis activity"/>
    <property type="evidence" value="ECO:0007669"/>
    <property type="project" value="InterPro"/>
</dbReference>
<dbReference type="GO" id="GO:0003688">
    <property type="term" value="F:DNA replication origin binding"/>
    <property type="evidence" value="ECO:0007669"/>
    <property type="project" value="UniProtKB-UniRule"/>
</dbReference>
<dbReference type="GO" id="GO:0008289">
    <property type="term" value="F:lipid binding"/>
    <property type="evidence" value="ECO:0007669"/>
    <property type="project" value="UniProtKB-KW"/>
</dbReference>
<dbReference type="GO" id="GO:0006270">
    <property type="term" value="P:DNA replication initiation"/>
    <property type="evidence" value="ECO:0007669"/>
    <property type="project" value="UniProtKB-UniRule"/>
</dbReference>
<dbReference type="GO" id="GO:0006275">
    <property type="term" value="P:regulation of DNA replication"/>
    <property type="evidence" value="ECO:0007669"/>
    <property type="project" value="UniProtKB-UniRule"/>
</dbReference>
<dbReference type="CDD" id="cd00009">
    <property type="entry name" value="AAA"/>
    <property type="match status" value="1"/>
</dbReference>
<dbReference type="CDD" id="cd06571">
    <property type="entry name" value="Bac_DnaA_C"/>
    <property type="match status" value="1"/>
</dbReference>
<dbReference type="FunFam" id="1.10.1750.10:FF:000001">
    <property type="entry name" value="Chromosomal replication initiator protein DnaA"/>
    <property type="match status" value="1"/>
</dbReference>
<dbReference type="FunFam" id="1.10.8.60:FF:000003">
    <property type="entry name" value="Chromosomal replication initiator protein DnaA"/>
    <property type="match status" value="1"/>
</dbReference>
<dbReference type="FunFam" id="3.40.50.300:FF:000103">
    <property type="entry name" value="Chromosomal replication initiator protein DnaA"/>
    <property type="match status" value="1"/>
</dbReference>
<dbReference type="Gene3D" id="1.10.1750.10">
    <property type="match status" value="1"/>
</dbReference>
<dbReference type="Gene3D" id="1.10.8.60">
    <property type="match status" value="1"/>
</dbReference>
<dbReference type="Gene3D" id="3.30.300.180">
    <property type="match status" value="1"/>
</dbReference>
<dbReference type="Gene3D" id="3.40.50.300">
    <property type="entry name" value="P-loop containing nucleotide triphosphate hydrolases"/>
    <property type="match status" value="1"/>
</dbReference>
<dbReference type="HAMAP" id="MF_00377">
    <property type="entry name" value="DnaA_bact"/>
    <property type="match status" value="1"/>
</dbReference>
<dbReference type="InterPro" id="IPR003593">
    <property type="entry name" value="AAA+_ATPase"/>
</dbReference>
<dbReference type="InterPro" id="IPR001957">
    <property type="entry name" value="Chromosome_initiator_DnaA"/>
</dbReference>
<dbReference type="InterPro" id="IPR020591">
    <property type="entry name" value="Chromosome_initiator_DnaA-like"/>
</dbReference>
<dbReference type="InterPro" id="IPR018312">
    <property type="entry name" value="Chromosome_initiator_DnaA_CS"/>
</dbReference>
<dbReference type="InterPro" id="IPR013159">
    <property type="entry name" value="DnaA_C"/>
</dbReference>
<dbReference type="InterPro" id="IPR013317">
    <property type="entry name" value="DnaA_dom"/>
</dbReference>
<dbReference type="InterPro" id="IPR024633">
    <property type="entry name" value="DnaA_N_dom"/>
</dbReference>
<dbReference type="InterPro" id="IPR038454">
    <property type="entry name" value="DnaA_N_sf"/>
</dbReference>
<dbReference type="InterPro" id="IPR027417">
    <property type="entry name" value="P-loop_NTPase"/>
</dbReference>
<dbReference type="InterPro" id="IPR010921">
    <property type="entry name" value="Trp_repressor/repl_initiator"/>
</dbReference>
<dbReference type="NCBIfam" id="TIGR00362">
    <property type="entry name" value="DnaA"/>
    <property type="match status" value="1"/>
</dbReference>
<dbReference type="PANTHER" id="PTHR30050">
    <property type="entry name" value="CHROMOSOMAL REPLICATION INITIATOR PROTEIN DNAA"/>
    <property type="match status" value="1"/>
</dbReference>
<dbReference type="PANTHER" id="PTHR30050:SF2">
    <property type="entry name" value="CHROMOSOMAL REPLICATION INITIATOR PROTEIN DNAA"/>
    <property type="match status" value="1"/>
</dbReference>
<dbReference type="Pfam" id="PF00308">
    <property type="entry name" value="Bac_DnaA"/>
    <property type="match status" value="1"/>
</dbReference>
<dbReference type="Pfam" id="PF08299">
    <property type="entry name" value="Bac_DnaA_C"/>
    <property type="match status" value="1"/>
</dbReference>
<dbReference type="Pfam" id="PF11638">
    <property type="entry name" value="DnaA_N"/>
    <property type="match status" value="1"/>
</dbReference>
<dbReference type="PRINTS" id="PR00051">
    <property type="entry name" value="DNAA"/>
</dbReference>
<dbReference type="SMART" id="SM00382">
    <property type="entry name" value="AAA"/>
    <property type="match status" value="1"/>
</dbReference>
<dbReference type="SMART" id="SM00760">
    <property type="entry name" value="Bac_DnaA_C"/>
    <property type="match status" value="1"/>
</dbReference>
<dbReference type="SUPFAM" id="SSF52540">
    <property type="entry name" value="P-loop containing nucleoside triphosphate hydrolases"/>
    <property type="match status" value="1"/>
</dbReference>
<dbReference type="SUPFAM" id="SSF48295">
    <property type="entry name" value="TrpR-like"/>
    <property type="match status" value="1"/>
</dbReference>
<dbReference type="PROSITE" id="PS01008">
    <property type="entry name" value="DNAA"/>
    <property type="match status" value="1"/>
</dbReference>
<keyword id="KW-0067">ATP-binding</keyword>
<keyword id="KW-0963">Cytoplasm</keyword>
<keyword id="KW-0235">DNA replication</keyword>
<keyword id="KW-0238">DNA-binding</keyword>
<keyword id="KW-0446">Lipid-binding</keyword>
<keyword id="KW-0547">Nucleotide-binding</keyword>
<sequence>MSVELWQQCVELLRDELPAQQFNTWIRPLQVEAEGDELRVYAPNRFVLDWVNEKYLGRLLELLGENGSGIAPALSLLIGSRRSSAPRAAPNAPVSAAMAASLAQTHAQPAAAPVMAVADPVSVPTAEPAQASDMAEASSRDSYDSMADSAPAPVAPGRTEQRNVQVEGALKHTSYLNRTFTFETFVEGKSNQLARAAAWQVADNPKHGYNPLFLYGGVGLGKTHLMHAVGNHLLKKNPNAKVVYLHSERFVADMVKALQLNAINEFKRFYRSVDALLIDDIQFFARKERSQEEFFHTFNALLEGGQQVILTSDRYPKEIEGLEERLKSRFGWGLTVAVEPPELETRVAILMKKADQAKVELPHDAAFFIAQRIRSNVRELEGALKRVIAHSHFMGRDITIELIRESLKDLLALQDKLVSVDNIQRTVAEYYKIKISDLLSKRRSRSVARPRQVAMALSKELTNHSLPEIGDMFGGRDHTTVLHACRKINELKESDADIREDYKNLLRTLTT</sequence>
<name>DNAA_PSEPW</name>
<proteinExistence type="inferred from homology"/>
<organism>
    <name type="scientific">Pseudomonas putida (strain W619)</name>
    <dbReference type="NCBI Taxonomy" id="390235"/>
    <lineage>
        <taxon>Bacteria</taxon>
        <taxon>Pseudomonadati</taxon>
        <taxon>Pseudomonadota</taxon>
        <taxon>Gammaproteobacteria</taxon>
        <taxon>Pseudomonadales</taxon>
        <taxon>Pseudomonadaceae</taxon>
        <taxon>Pseudomonas</taxon>
    </lineage>
</organism>
<protein>
    <recommendedName>
        <fullName evidence="1">Chromosomal replication initiator protein DnaA</fullName>
    </recommendedName>
</protein>
<reference key="1">
    <citation type="submission" date="2008-02" db="EMBL/GenBank/DDBJ databases">
        <title>Complete sequence of Pseudomonas putida W619.</title>
        <authorList>
            <person name="Copeland A."/>
            <person name="Lucas S."/>
            <person name="Lapidus A."/>
            <person name="Barry K."/>
            <person name="Detter J.C."/>
            <person name="Glavina del Rio T."/>
            <person name="Dalin E."/>
            <person name="Tice H."/>
            <person name="Pitluck S."/>
            <person name="Chain P."/>
            <person name="Malfatti S."/>
            <person name="Shin M."/>
            <person name="Vergez L."/>
            <person name="Schmutz J."/>
            <person name="Larimer F."/>
            <person name="Land M."/>
            <person name="Hauser L."/>
            <person name="Kyrpides N."/>
            <person name="Kim E."/>
            <person name="Taghavi S."/>
            <person name="Vangronsveld D."/>
            <person name="van der Lelie D."/>
            <person name="Richardson P."/>
        </authorList>
    </citation>
    <scope>NUCLEOTIDE SEQUENCE [LARGE SCALE GENOMIC DNA]</scope>
    <source>
        <strain>W619</strain>
    </source>
</reference>
<accession>B1J3Y2</accession>
<evidence type="ECO:0000255" key="1">
    <source>
        <dbReference type="HAMAP-Rule" id="MF_00377"/>
    </source>
</evidence>
<evidence type="ECO:0000256" key="2">
    <source>
        <dbReference type="SAM" id="MobiDB-lite"/>
    </source>
</evidence>